<sequence>MSQQNIPFTNNVQTADFSVQHSKSEKVNLMNMTRQEMREFLANLGEKPFRADQLMKWIYHFGEDEFDNMSNINKVLREKLKKVAEIKAPAIAIEQRSSDGTIKWAMQVGNQQIETVYIPEGDRATLCVSSQVGCALECKFCSTAQQGFNRNLTVSEIIGQVWRASKIIGNFGITGVRPITNVVMMGMGEPLLNMNNVIPAMQIMLDDFAYGLSKRRVTLSTAGVVPALDLMREKIDVALAISLHAPNNELRNEIMPINKKYNIKMLMDSVAKYLAVSNANHGKVTIEYVLLDHVNDGTEHAHQLAEVLKNTPCKINLIPWNPFPEAPYGKSSNSRVDRFQKTLMEYGFTVIVRKTRGDDIDAACGQLAGEVIDRTKRTLEKRKFGKSIMVNNH</sequence>
<organism>
    <name type="scientific">Haemophilus ducreyi (strain 35000HP / ATCC 700724)</name>
    <dbReference type="NCBI Taxonomy" id="233412"/>
    <lineage>
        <taxon>Bacteria</taxon>
        <taxon>Pseudomonadati</taxon>
        <taxon>Pseudomonadota</taxon>
        <taxon>Gammaproteobacteria</taxon>
        <taxon>Pasteurellales</taxon>
        <taxon>Pasteurellaceae</taxon>
        <taxon>Haemophilus</taxon>
    </lineage>
</organism>
<gene>
    <name evidence="1" type="primary">rlmN</name>
    <name type="ordered locus">HD_0319</name>
</gene>
<protein>
    <recommendedName>
        <fullName evidence="1">Dual-specificity RNA methyltransferase RlmN</fullName>
        <ecNumber evidence="1">2.1.1.192</ecNumber>
    </recommendedName>
    <alternativeName>
        <fullName evidence="1">23S rRNA (adenine(2503)-C(2))-methyltransferase</fullName>
    </alternativeName>
    <alternativeName>
        <fullName evidence="1">23S rRNA m2A2503 methyltransferase</fullName>
    </alternativeName>
    <alternativeName>
        <fullName evidence="1">Ribosomal RNA large subunit methyltransferase N</fullName>
    </alternativeName>
    <alternativeName>
        <fullName evidence="1">tRNA (adenine(37)-C(2))-methyltransferase</fullName>
    </alternativeName>
    <alternativeName>
        <fullName evidence="1">tRNA m2A37 methyltransferase</fullName>
    </alternativeName>
</protein>
<reference key="1">
    <citation type="submission" date="2003-06" db="EMBL/GenBank/DDBJ databases">
        <title>The complete genome sequence of Haemophilus ducreyi.</title>
        <authorList>
            <person name="Munson R.S. Jr."/>
            <person name="Ray W.C."/>
            <person name="Mahairas G."/>
            <person name="Sabo P."/>
            <person name="Mungur R."/>
            <person name="Johnson L."/>
            <person name="Nguyen D."/>
            <person name="Wang J."/>
            <person name="Forst C."/>
            <person name="Hood L."/>
        </authorList>
    </citation>
    <scope>NUCLEOTIDE SEQUENCE [LARGE SCALE GENOMIC DNA]</scope>
    <source>
        <strain>35000HP / ATCC 700724</strain>
    </source>
</reference>
<accession>Q7VNZ4</accession>
<dbReference type="EC" id="2.1.1.192" evidence="1"/>
<dbReference type="EMBL" id="AE017143">
    <property type="protein sequence ID" value="AAP95296.1"/>
    <property type="molecule type" value="Genomic_DNA"/>
</dbReference>
<dbReference type="RefSeq" id="WP_010944349.1">
    <property type="nucleotide sequence ID" value="NC_002940.2"/>
</dbReference>
<dbReference type="SMR" id="Q7VNZ4"/>
<dbReference type="STRING" id="233412.HD_0319"/>
<dbReference type="KEGG" id="hdu:HD_0319"/>
<dbReference type="eggNOG" id="COG0820">
    <property type="taxonomic scope" value="Bacteria"/>
</dbReference>
<dbReference type="HOGENOM" id="CLU_029101_0_0_6"/>
<dbReference type="OrthoDB" id="9793973at2"/>
<dbReference type="Proteomes" id="UP000001022">
    <property type="component" value="Chromosome"/>
</dbReference>
<dbReference type="GO" id="GO:0005737">
    <property type="term" value="C:cytoplasm"/>
    <property type="evidence" value="ECO:0007669"/>
    <property type="project" value="UniProtKB-SubCell"/>
</dbReference>
<dbReference type="GO" id="GO:0051539">
    <property type="term" value="F:4 iron, 4 sulfur cluster binding"/>
    <property type="evidence" value="ECO:0007669"/>
    <property type="project" value="UniProtKB-UniRule"/>
</dbReference>
<dbReference type="GO" id="GO:0046872">
    <property type="term" value="F:metal ion binding"/>
    <property type="evidence" value="ECO:0007669"/>
    <property type="project" value="UniProtKB-KW"/>
</dbReference>
<dbReference type="GO" id="GO:0070040">
    <property type="term" value="F:rRNA (adenine(2503)-C2-)-methyltransferase activity"/>
    <property type="evidence" value="ECO:0007669"/>
    <property type="project" value="UniProtKB-UniRule"/>
</dbReference>
<dbReference type="GO" id="GO:0019843">
    <property type="term" value="F:rRNA binding"/>
    <property type="evidence" value="ECO:0007669"/>
    <property type="project" value="UniProtKB-UniRule"/>
</dbReference>
<dbReference type="GO" id="GO:0002935">
    <property type="term" value="F:tRNA (adenine(37)-C2)-methyltransferase activity"/>
    <property type="evidence" value="ECO:0007669"/>
    <property type="project" value="UniProtKB-UniRule"/>
</dbReference>
<dbReference type="GO" id="GO:0000049">
    <property type="term" value="F:tRNA binding"/>
    <property type="evidence" value="ECO:0007669"/>
    <property type="project" value="UniProtKB-UniRule"/>
</dbReference>
<dbReference type="GO" id="GO:0070475">
    <property type="term" value="P:rRNA base methylation"/>
    <property type="evidence" value="ECO:0007669"/>
    <property type="project" value="UniProtKB-UniRule"/>
</dbReference>
<dbReference type="GO" id="GO:0030488">
    <property type="term" value="P:tRNA methylation"/>
    <property type="evidence" value="ECO:0007669"/>
    <property type="project" value="UniProtKB-UniRule"/>
</dbReference>
<dbReference type="CDD" id="cd01335">
    <property type="entry name" value="Radical_SAM"/>
    <property type="match status" value="1"/>
</dbReference>
<dbReference type="FunFam" id="1.10.150.530:FF:000003">
    <property type="entry name" value="Dual-specificity RNA methyltransferase RlmN"/>
    <property type="match status" value="1"/>
</dbReference>
<dbReference type="FunFam" id="3.20.20.70:FF:000008">
    <property type="entry name" value="Dual-specificity RNA methyltransferase RlmN"/>
    <property type="match status" value="1"/>
</dbReference>
<dbReference type="Gene3D" id="1.10.150.530">
    <property type="match status" value="1"/>
</dbReference>
<dbReference type="Gene3D" id="3.20.20.70">
    <property type="entry name" value="Aldolase class I"/>
    <property type="match status" value="1"/>
</dbReference>
<dbReference type="HAMAP" id="MF_01849">
    <property type="entry name" value="RNA_methyltr_RlmN"/>
    <property type="match status" value="1"/>
</dbReference>
<dbReference type="InterPro" id="IPR013785">
    <property type="entry name" value="Aldolase_TIM"/>
</dbReference>
<dbReference type="InterPro" id="IPR040072">
    <property type="entry name" value="Methyltransferase_A"/>
</dbReference>
<dbReference type="InterPro" id="IPR048641">
    <property type="entry name" value="RlmN_N"/>
</dbReference>
<dbReference type="InterPro" id="IPR027492">
    <property type="entry name" value="RNA_MTrfase_RlmN"/>
</dbReference>
<dbReference type="InterPro" id="IPR004383">
    <property type="entry name" value="rRNA_lsu_MTrfase_RlmN/Cfr"/>
</dbReference>
<dbReference type="InterPro" id="IPR007197">
    <property type="entry name" value="rSAM"/>
</dbReference>
<dbReference type="NCBIfam" id="NF008396">
    <property type="entry name" value="PRK11194.1"/>
    <property type="match status" value="1"/>
</dbReference>
<dbReference type="NCBIfam" id="TIGR00048">
    <property type="entry name" value="rRNA_mod_RlmN"/>
    <property type="match status" value="1"/>
</dbReference>
<dbReference type="PANTHER" id="PTHR30544">
    <property type="entry name" value="23S RRNA METHYLTRANSFERASE"/>
    <property type="match status" value="1"/>
</dbReference>
<dbReference type="PANTHER" id="PTHR30544:SF5">
    <property type="entry name" value="RADICAL SAM CORE DOMAIN-CONTAINING PROTEIN"/>
    <property type="match status" value="1"/>
</dbReference>
<dbReference type="Pfam" id="PF04055">
    <property type="entry name" value="Radical_SAM"/>
    <property type="match status" value="1"/>
</dbReference>
<dbReference type="Pfam" id="PF21016">
    <property type="entry name" value="RlmN_N"/>
    <property type="match status" value="1"/>
</dbReference>
<dbReference type="PIRSF" id="PIRSF006004">
    <property type="entry name" value="CHP00048"/>
    <property type="match status" value="1"/>
</dbReference>
<dbReference type="SFLD" id="SFLDF00275">
    <property type="entry name" value="adenosine_C2_methyltransferase"/>
    <property type="match status" value="1"/>
</dbReference>
<dbReference type="SFLD" id="SFLDS00029">
    <property type="entry name" value="Radical_SAM"/>
    <property type="match status" value="1"/>
</dbReference>
<dbReference type="SUPFAM" id="SSF102114">
    <property type="entry name" value="Radical SAM enzymes"/>
    <property type="match status" value="1"/>
</dbReference>
<dbReference type="PROSITE" id="PS51918">
    <property type="entry name" value="RADICAL_SAM"/>
    <property type="match status" value="1"/>
</dbReference>
<comment type="function">
    <text evidence="1">Specifically methylates position 2 of adenine 2503 in 23S rRNA and position 2 of adenine 37 in tRNAs. m2A2503 modification seems to play a crucial role in the proofreading step occurring at the peptidyl transferase center and thus would serve to optimize ribosomal fidelity.</text>
</comment>
<comment type="catalytic activity">
    <reaction evidence="1">
        <text>adenosine(2503) in 23S rRNA + 2 reduced [2Fe-2S]-[ferredoxin] + 2 S-adenosyl-L-methionine = 2-methyladenosine(2503) in 23S rRNA + 5'-deoxyadenosine + L-methionine + 2 oxidized [2Fe-2S]-[ferredoxin] + S-adenosyl-L-homocysteine</text>
        <dbReference type="Rhea" id="RHEA:42916"/>
        <dbReference type="Rhea" id="RHEA-COMP:10000"/>
        <dbReference type="Rhea" id="RHEA-COMP:10001"/>
        <dbReference type="Rhea" id="RHEA-COMP:10152"/>
        <dbReference type="Rhea" id="RHEA-COMP:10282"/>
        <dbReference type="ChEBI" id="CHEBI:17319"/>
        <dbReference type="ChEBI" id="CHEBI:33737"/>
        <dbReference type="ChEBI" id="CHEBI:33738"/>
        <dbReference type="ChEBI" id="CHEBI:57844"/>
        <dbReference type="ChEBI" id="CHEBI:57856"/>
        <dbReference type="ChEBI" id="CHEBI:59789"/>
        <dbReference type="ChEBI" id="CHEBI:74411"/>
        <dbReference type="ChEBI" id="CHEBI:74497"/>
        <dbReference type="EC" id="2.1.1.192"/>
    </reaction>
</comment>
<comment type="catalytic activity">
    <reaction evidence="1">
        <text>adenosine(37) in tRNA + 2 reduced [2Fe-2S]-[ferredoxin] + 2 S-adenosyl-L-methionine = 2-methyladenosine(37) in tRNA + 5'-deoxyadenosine + L-methionine + 2 oxidized [2Fe-2S]-[ferredoxin] + S-adenosyl-L-homocysteine</text>
        <dbReference type="Rhea" id="RHEA:43332"/>
        <dbReference type="Rhea" id="RHEA-COMP:10000"/>
        <dbReference type="Rhea" id="RHEA-COMP:10001"/>
        <dbReference type="Rhea" id="RHEA-COMP:10162"/>
        <dbReference type="Rhea" id="RHEA-COMP:10485"/>
        <dbReference type="ChEBI" id="CHEBI:17319"/>
        <dbReference type="ChEBI" id="CHEBI:33737"/>
        <dbReference type="ChEBI" id="CHEBI:33738"/>
        <dbReference type="ChEBI" id="CHEBI:57844"/>
        <dbReference type="ChEBI" id="CHEBI:57856"/>
        <dbReference type="ChEBI" id="CHEBI:59789"/>
        <dbReference type="ChEBI" id="CHEBI:74411"/>
        <dbReference type="ChEBI" id="CHEBI:74497"/>
        <dbReference type="EC" id="2.1.1.192"/>
    </reaction>
</comment>
<comment type="cofactor">
    <cofactor evidence="1">
        <name>[4Fe-4S] cluster</name>
        <dbReference type="ChEBI" id="CHEBI:49883"/>
    </cofactor>
    <text evidence="1">Binds 1 [4Fe-4S] cluster. The cluster is coordinated with 3 cysteines and an exchangeable S-adenosyl-L-methionine.</text>
</comment>
<comment type="subcellular location">
    <subcellularLocation>
        <location evidence="1">Cytoplasm</location>
    </subcellularLocation>
</comment>
<comment type="miscellaneous">
    <text evidence="1">Reaction proceeds by a ping-pong mechanism involving intermediate methylation of a conserved cysteine residue.</text>
</comment>
<comment type="similarity">
    <text evidence="1">Belongs to the radical SAM superfamily. RlmN family.</text>
</comment>
<keyword id="KW-0004">4Fe-4S</keyword>
<keyword id="KW-0963">Cytoplasm</keyword>
<keyword id="KW-1015">Disulfide bond</keyword>
<keyword id="KW-0408">Iron</keyword>
<keyword id="KW-0411">Iron-sulfur</keyword>
<keyword id="KW-0479">Metal-binding</keyword>
<keyword id="KW-0489">Methyltransferase</keyword>
<keyword id="KW-1185">Reference proteome</keyword>
<keyword id="KW-0698">rRNA processing</keyword>
<keyword id="KW-0949">S-adenosyl-L-methionine</keyword>
<keyword id="KW-0808">Transferase</keyword>
<keyword id="KW-0819">tRNA processing</keyword>
<name>RLMN_HAEDU</name>
<evidence type="ECO:0000255" key="1">
    <source>
        <dbReference type="HAMAP-Rule" id="MF_01849"/>
    </source>
</evidence>
<evidence type="ECO:0000255" key="2">
    <source>
        <dbReference type="PROSITE-ProRule" id="PRU01266"/>
    </source>
</evidence>
<proteinExistence type="inferred from homology"/>
<feature type="chain" id="PRO_0000350201" description="Dual-specificity RNA methyltransferase RlmN">
    <location>
        <begin position="1"/>
        <end position="393"/>
    </location>
</feature>
<feature type="domain" description="Radical SAM core" evidence="2">
    <location>
        <begin position="120"/>
        <end position="359"/>
    </location>
</feature>
<feature type="active site" description="Proton acceptor" evidence="1">
    <location>
        <position position="114"/>
    </location>
</feature>
<feature type="active site" description="S-methylcysteine intermediate" evidence="1">
    <location>
        <position position="364"/>
    </location>
</feature>
<feature type="binding site" evidence="1">
    <location>
        <position position="134"/>
    </location>
    <ligand>
        <name>[4Fe-4S] cluster</name>
        <dbReference type="ChEBI" id="CHEBI:49883"/>
        <note>4Fe-4S-S-AdoMet</note>
    </ligand>
</feature>
<feature type="binding site" evidence="1">
    <location>
        <position position="138"/>
    </location>
    <ligand>
        <name>[4Fe-4S] cluster</name>
        <dbReference type="ChEBI" id="CHEBI:49883"/>
        <note>4Fe-4S-S-AdoMet</note>
    </ligand>
</feature>
<feature type="binding site" evidence="1">
    <location>
        <position position="141"/>
    </location>
    <ligand>
        <name>[4Fe-4S] cluster</name>
        <dbReference type="ChEBI" id="CHEBI:49883"/>
        <note>4Fe-4S-S-AdoMet</note>
    </ligand>
</feature>
<feature type="binding site" evidence="1">
    <location>
        <begin position="188"/>
        <end position="189"/>
    </location>
    <ligand>
        <name>S-adenosyl-L-methionine</name>
        <dbReference type="ChEBI" id="CHEBI:59789"/>
    </ligand>
</feature>
<feature type="binding site" evidence="1">
    <location>
        <position position="220"/>
    </location>
    <ligand>
        <name>S-adenosyl-L-methionine</name>
        <dbReference type="ChEBI" id="CHEBI:59789"/>
    </ligand>
</feature>
<feature type="binding site" evidence="1">
    <location>
        <begin position="242"/>
        <end position="244"/>
    </location>
    <ligand>
        <name>S-adenosyl-L-methionine</name>
        <dbReference type="ChEBI" id="CHEBI:59789"/>
    </ligand>
</feature>
<feature type="binding site" evidence="1">
    <location>
        <position position="321"/>
    </location>
    <ligand>
        <name>S-adenosyl-L-methionine</name>
        <dbReference type="ChEBI" id="CHEBI:59789"/>
    </ligand>
</feature>
<feature type="disulfide bond" description="(transient)" evidence="1">
    <location>
        <begin position="127"/>
        <end position="364"/>
    </location>
</feature>